<name>MRR1_CANAL</name>
<dbReference type="EMBL" id="CP017625">
    <property type="protein sequence ID" value="AOW28600.1"/>
    <property type="molecule type" value="Genomic_DNA"/>
</dbReference>
<dbReference type="RefSeq" id="XP_716613.1">
    <property type="nucleotide sequence ID" value="XM_711520.1"/>
</dbReference>
<dbReference type="SMR" id="Q5A4G2"/>
<dbReference type="FunCoup" id="Q5A4G2">
    <property type="interactions" value="551"/>
</dbReference>
<dbReference type="STRING" id="237561.Q5A4G2"/>
<dbReference type="EnsemblFungi" id="C3_05920W_A-T">
    <property type="protein sequence ID" value="C3_05920W_A-T-p1"/>
    <property type="gene ID" value="C3_05920W_A"/>
</dbReference>
<dbReference type="GeneID" id="3641741"/>
<dbReference type="KEGG" id="cal:CAALFM_C305920WA"/>
<dbReference type="CGD" id="CAL0000179436">
    <property type="gene designation" value="MRR1"/>
</dbReference>
<dbReference type="VEuPathDB" id="FungiDB:C3_05920W_A"/>
<dbReference type="eggNOG" id="ENOG502QRPQ">
    <property type="taxonomic scope" value="Eukaryota"/>
</dbReference>
<dbReference type="HOGENOM" id="CLU_005934_0_0_1"/>
<dbReference type="InParanoid" id="Q5A4G2"/>
<dbReference type="OMA" id="SCLTRCA"/>
<dbReference type="OrthoDB" id="4159781at2759"/>
<dbReference type="Proteomes" id="UP000000559">
    <property type="component" value="Chromosome 3"/>
</dbReference>
<dbReference type="GO" id="GO:0005634">
    <property type="term" value="C:nucleus"/>
    <property type="evidence" value="ECO:0000318"/>
    <property type="project" value="GO_Central"/>
</dbReference>
<dbReference type="GO" id="GO:0003677">
    <property type="term" value="F:DNA binding"/>
    <property type="evidence" value="ECO:0007669"/>
    <property type="project" value="UniProtKB-KW"/>
</dbReference>
<dbReference type="GO" id="GO:0000981">
    <property type="term" value="F:DNA-binding transcription factor activity, RNA polymerase II-specific"/>
    <property type="evidence" value="ECO:0000315"/>
    <property type="project" value="CGD"/>
</dbReference>
<dbReference type="GO" id="GO:0008270">
    <property type="term" value="F:zinc ion binding"/>
    <property type="evidence" value="ECO:0007669"/>
    <property type="project" value="InterPro"/>
</dbReference>
<dbReference type="GO" id="GO:0006351">
    <property type="term" value="P:DNA-templated transcription"/>
    <property type="evidence" value="ECO:0007669"/>
    <property type="project" value="InterPro"/>
</dbReference>
<dbReference type="GO" id="GO:0045944">
    <property type="term" value="P:positive regulation of transcription by RNA polymerase II"/>
    <property type="evidence" value="ECO:0000315"/>
    <property type="project" value="CGD"/>
</dbReference>
<dbReference type="CDD" id="cd12148">
    <property type="entry name" value="fungal_TF_MHR"/>
    <property type="match status" value="1"/>
</dbReference>
<dbReference type="CDD" id="cd00067">
    <property type="entry name" value="GAL4"/>
    <property type="match status" value="1"/>
</dbReference>
<dbReference type="Gene3D" id="4.10.240.10">
    <property type="entry name" value="Zn(2)-C6 fungal-type DNA-binding domain"/>
    <property type="match status" value="1"/>
</dbReference>
<dbReference type="InterPro" id="IPR050675">
    <property type="entry name" value="OAF3"/>
</dbReference>
<dbReference type="InterPro" id="IPR007219">
    <property type="entry name" value="Transcription_factor_dom_fun"/>
</dbReference>
<dbReference type="InterPro" id="IPR036864">
    <property type="entry name" value="Zn2-C6_fun-type_DNA-bd_sf"/>
</dbReference>
<dbReference type="InterPro" id="IPR001138">
    <property type="entry name" value="Zn2Cys6_DnaBD"/>
</dbReference>
<dbReference type="PANTHER" id="PTHR31069">
    <property type="entry name" value="OLEATE-ACTIVATED TRANSCRIPTION FACTOR 1-RELATED"/>
    <property type="match status" value="1"/>
</dbReference>
<dbReference type="PANTHER" id="PTHR31069:SF12">
    <property type="entry name" value="TRANSCRIPTION FACTOR DOMAIN-CONTAINING PROTEIN"/>
    <property type="match status" value="1"/>
</dbReference>
<dbReference type="Pfam" id="PF04082">
    <property type="entry name" value="Fungal_trans"/>
    <property type="match status" value="1"/>
</dbReference>
<dbReference type="Pfam" id="PF00172">
    <property type="entry name" value="Zn_clus"/>
    <property type="match status" value="1"/>
</dbReference>
<dbReference type="SMART" id="SM00906">
    <property type="entry name" value="Fungal_trans"/>
    <property type="match status" value="1"/>
</dbReference>
<dbReference type="SMART" id="SM00066">
    <property type="entry name" value="GAL4"/>
    <property type="match status" value="1"/>
</dbReference>
<dbReference type="SUPFAM" id="SSF57701">
    <property type="entry name" value="Zn2/Cys6 DNA-binding domain"/>
    <property type="match status" value="1"/>
</dbReference>
<dbReference type="PROSITE" id="PS00463">
    <property type="entry name" value="ZN2_CY6_FUNGAL_1"/>
    <property type="match status" value="1"/>
</dbReference>
<dbReference type="PROSITE" id="PS50048">
    <property type="entry name" value="ZN2_CY6_FUNGAL_2"/>
    <property type="match status" value="1"/>
</dbReference>
<feature type="chain" id="PRO_0000431799" description="Multidrug resistance regulator 1">
    <location>
        <begin position="1"/>
        <end position="1108"/>
    </location>
</feature>
<feature type="DNA-binding region" description="Zn(2)-C6 fungal-type" evidence="2">
    <location>
        <begin position="31"/>
        <end position="59"/>
    </location>
</feature>
<feature type="region of interest" description="Disordered" evidence="3">
    <location>
        <begin position="1"/>
        <end position="27"/>
    </location>
</feature>
<feature type="region of interest" description="Disordered" evidence="3">
    <location>
        <begin position="68"/>
        <end position="138"/>
    </location>
</feature>
<feature type="region of interest" description="Disordered" evidence="3">
    <location>
        <begin position="968"/>
        <end position="990"/>
    </location>
</feature>
<feature type="region of interest" description="Disordered" evidence="3">
    <location>
        <begin position="1021"/>
        <end position="1064"/>
    </location>
</feature>
<feature type="coiled-coil region" evidence="1">
    <location>
        <begin position="134"/>
        <end position="165"/>
    </location>
</feature>
<feature type="compositionally biased region" description="Polar residues" evidence="3">
    <location>
        <begin position="1"/>
        <end position="19"/>
    </location>
</feature>
<feature type="compositionally biased region" description="Polar residues" evidence="3">
    <location>
        <begin position="68"/>
        <end position="83"/>
    </location>
</feature>
<feature type="compositionally biased region" description="Basic and acidic residues" evidence="3">
    <location>
        <begin position="86"/>
        <end position="104"/>
    </location>
</feature>
<feature type="compositionally biased region" description="Basic and acidic residues" evidence="3">
    <location>
        <begin position="114"/>
        <end position="123"/>
    </location>
</feature>
<feature type="compositionally biased region" description="Polar residues" evidence="3">
    <location>
        <begin position="124"/>
        <end position="138"/>
    </location>
</feature>
<feature type="compositionally biased region" description="Low complexity" evidence="3">
    <location>
        <begin position="970"/>
        <end position="980"/>
    </location>
</feature>
<feature type="compositionally biased region" description="Low complexity" evidence="3">
    <location>
        <begin position="1023"/>
        <end position="1041"/>
    </location>
</feature>
<feature type="mutagenesis site" description="Leads to constitutive MDR1 overexpression and multidrug resistance." evidence="4 9 10 12 13">
    <original>P</original>
    <variation>S</variation>
    <location>
        <position position="683"/>
    </location>
</feature>
<feature type="mutagenesis site" description="Leads to constitutive MDR1 overexpression and multidrug resistance." evidence="4">
    <original>G</original>
    <variation>V</variation>
    <location>
        <position position="997"/>
    </location>
</feature>
<sequence length="1108" mass="126669">MSIATTPIETPKSPKSTEPQVRKRKKVSTVCTNCRKRKIRCDRQHPCNNCIKSKKHNACVYDDGQVSPANFSTNGSSHGNTVPESRPYEESARIPIRFDAEAPRKKSKPNTPNNERKNSKKSPDNTVANNQQTASENEVTITLSELNMLKQRLQNIEANINAQSNPQSNPSYVPQTPAYPTQPNILPPPVSFNSWSPKQSNERVMFSPQQRLTTNYNVSHTRGQSPSIQLPPLSFKDTPRASIDSAPLYSEMSPPRSDLIASSLTSPESIQMSVSGDVVGVNPYLNETETINFYDGYTSICVRDFRRVNHGPFAWSSLMRKDKALSSLWNHILKKKEKKNVASQTFVFGQDVHEISQENTQLVASESNESETKFKKKTLETFGFNDVVPYDILKKKLQTQINKTTSPLGLTLYEEQVNMELQLVDRIHQQLPKKKVLWKLIDRFFSLLYPFMPFLDEIDFRESVTKIIGETEYKDEKIKELKVEKRLDLAVIGVLLIILRMSYLSLFCNKESVNEMRLKTTDPSPEAQDMKYLLQNPIGISLIDSAQNCLQYFDIFRKTSMPVLQCAYFLQLYHIFAPEDGDDGDGADTYALNSMVVRMAYSMGLNREPDNFKDVLNDKRQNHLGRKIWHFLVIGDVHNSYAFGTPKLIGDDFYDTKVPFIEEGNENLIDKSLDQYVTKSVFPGYFSIYNSVDQILKLILSVSRRSKVSEICKILNQFEIGIAEQYGTLSDCLKPKENLIHIFARNMPVKMYISLKSFLVSVYFHLFLYYEHKNDSLSFFYLRKILKTGAGDIMPHYFELLGNSEVVCDMVINPKLIQIIHKANQINIALIIRVNMSIYRMKNSQHHAENCKKDDFYYSYYKELCKFSSCLTRCAEVGIAAVSKLSTRYYYAWKITKGHNFLLKTITSMEFYEKESTNAQEITLPKYKLEQIADLENICEVALNKLGKTSVMGDEFCSNVNYKKYKGDQTYSTSSESSSTPNKDSPLDSRKYTNDFGLDLVNNQEIDKIWLQMLSLKSEEAQQQRQQESQPFTSSQSQSQSPLTSANQGYMPRPESRRGSYYGNTPFALENLNFDGFGGQSKSSNNGEADLSSFDFFVDLPFDQLFTN</sequence>
<gene>
    <name evidence="16" type="primary">MRR1</name>
    <name type="synonym">HAP1</name>
    <name type="ordered locus">CAALFM_C305920WA</name>
    <name type="ORF">CaO19.7372</name>
</gene>
<organism>
    <name type="scientific">Candida albicans (strain SC5314 / ATCC MYA-2876)</name>
    <name type="common">Yeast</name>
    <dbReference type="NCBI Taxonomy" id="237561"/>
    <lineage>
        <taxon>Eukaryota</taxon>
        <taxon>Fungi</taxon>
        <taxon>Dikarya</taxon>
        <taxon>Ascomycota</taxon>
        <taxon>Saccharomycotina</taxon>
        <taxon>Pichiomycetes</taxon>
        <taxon>Debaryomycetaceae</taxon>
        <taxon>Candida/Lodderomyces clade</taxon>
        <taxon>Candida</taxon>
    </lineage>
</organism>
<proteinExistence type="evidence at protein level"/>
<evidence type="ECO:0000255" key="1"/>
<evidence type="ECO:0000255" key="2">
    <source>
        <dbReference type="PROSITE-ProRule" id="PRU00227"/>
    </source>
</evidence>
<evidence type="ECO:0000256" key="3">
    <source>
        <dbReference type="SAM" id="MobiDB-lite"/>
    </source>
</evidence>
<evidence type="ECO:0000269" key="4">
    <source>
    </source>
</evidence>
<evidence type="ECO:0000269" key="5">
    <source>
    </source>
</evidence>
<evidence type="ECO:0000269" key="6">
    <source>
    </source>
</evidence>
<evidence type="ECO:0000269" key="7">
    <source>
    </source>
</evidence>
<evidence type="ECO:0000269" key="8">
    <source>
    </source>
</evidence>
<evidence type="ECO:0000269" key="9">
    <source>
    </source>
</evidence>
<evidence type="ECO:0000269" key="10">
    <source>
    </source>
</evidence>
<evidence type="ECO:0000269" key="11">
    <source>
    </source>
</evidence>
<evidence type="ECO:0000269" key="12">
    <source>
    </source>
</evidence>
<evidence type="ECO:0000269" key="13">
    <source>
    </source>
</evidence>
<evidence type="ECO:0000269" key="14">
    <source>
    </source>
</evidence>
<evidence type="ECO:0000269" key="15">
    <source>
    </source>
</evidence>
<evidence type="ECO:0000303" key="16">
    <source>
    </source>
</evidence>
<evidence type="ECO:0000305" key="17"/>
<accession>Q5A4G2</accession>
<accession>A0A1D8PKF0</accession>
<protein>
    <recommendedName>
        <fullName evidence="16">Multidrug resistance regulator 1</fullName>
    </recommendedName>
</protein>
<keyword id="KW-0175">Coiled coil</keyword>
<keyword id="KW-0238">DNA-binding</keyword>
<keyword id="KW-0479">Metal-binding</keyword>
<keyword id="KW-0539">Nucleus</keyword>
<keyword id="KW-1185">Reference proteome</keyword>
<keyword id="KW-0804">Transcription</keyword>
<keyword id="KW-0805">Transcription regulation</keyword>
<keyword id="KW-0862">Zinc</keyword>
<reference key="1">
    <citation type="journal article" date="2004" name="Proc. Natl. Acad. Sci. U.S.A.">
        <title>The diploid genome sequence of Candida albicans.</title>
        <authorList>
            <person name="Jones T."/>
            <person name="Federspiel N.A."/>
            <person name="Chibana H."/>
            <person name="Dungan J."/>
            <person name="Kalman S."/>
            <person name="Magee B.B."/>
            <person name="Newport G."/>
            <person name="Thorstenson Y.R."/>
            <person name="Agabian N."/>
            <person name="Magee P.T."/>
            <person name="Davis R.W."/>
            <person name="Scherer S."/>
        </authorList>
    </citation>
    <scope>NUCLEOTIDE SEQUENCE [LARGE SCALE GENOMIC DNA]</scope>
    <source>
        <strain>SC5314 / ATCC MYA-2876</strain>
    </source>
</reference>
<reference key="2">
    <citation type="journal article" date="2007" name="Genome Biol.">
        <title>Assembly of the Candida albicans genome into sixteen supercontigs aligned on the eight chromosomes.</title>
        <authorList>
            <person name="van het Hoog M."/>
            <person name="Rast T.J."/>
            <person name="Martchenko M."/>
            <person name="Grindle S."/>
            <person name="Dignard D."/>
            <person name="Hogues H."/>
            <person name="Cuomo C."/>
            <person name="Berriman M."/>
            <person name="Scherer S."/>
            <person name="Magee B.B."/>
            <person name="Whiteway M."/>
            <person name="Chibana H."/>
            <person name="Nantel A."/>
            <person name="Magee P.T."/>
        </authorList>
    </citation>
    <scope>GENOME REANNOTATION</scope>
    <source>
        <strain>SC5314 / ATCC MYA-2876</strain>
    </source>
</reference>
<reference key="3">
    <citation type="journal article" date="2013" name="Genome Biol.">
        <title>Assembly of a phased diploid Candida albicans genome facilitates allele-specific measurements and provides a simple model for repeat and indel structure.</title>
        <authorList>
            <person name="Muzzey D."/>
            <person name="Schwartz K."/>
            <person name="Weissman J.S."/>
            <person name="Sherlock G."/>
        </authorList>
    </citation>
    <scope>NUCLEOTIDE SEQUENCE [LARGE SCALE GENOMIC DNA]</scope>
    <scope>GENOME REANNOTATION</scope>
    <source>
        <strain>SC5314 / ATCC MYA-2876</strain>
    </source>
</reference>
<reference key="4">
    <citation type="journal article" date="2005" name="Comp. Funct. Genomics">
        <title>In silico analysis for transcription factors with Zn(II)(2)C(6) binuclear cluster DNA-binding domains in Candida albicans.</title>
        <authorList>
            <person name="Maicas S."/>
            <person name="Moreno I."/>
            <person name="Nieto A."/>
            <person name="Gomez M."/>
            <person name="Sentandreu R."/>
            <person name="Valentin E."/>
        </authorList>
    </citation>
    <scope>IDENTIFICATION</scope>
</reference>
<reference key="5">
    <citation type="journal article" date="2007" name="PLoS Pathog.">
        <title>The transcription factor Mrr1p controls expression of the MDR1 efflux pump and mediates multidrug resistance in Candida albicans.</title>
        <authorList>
            <person name="Morschhauser J."/>
            <person name="Barker K.S."/>
            <person name="Liu T.T."/>
            <person name="Blass-Warmuth J."/>
            <person name="Homayouni R."/>
            <person name="Rogers P.D."/>
        </authorList>
    </citation>
    <scope>INDUCTION</scope>
    <scope>DISRUPTION PHENOTYPE</scope>
    <scope>FUNCTION</scope>
    <scope>MUTAGENESIS OF PRO-683 AND GLY-997</scope>
</reference>
<reference key="6">
    <citation type="journal article" date="2008" name="Mol. Microbiol.">
        <title>Mutations in the multi-drug resistance regulator MRR1, followed by loss of heterozygosity, are the main cause of MDR1 overexpression in fluconazole-resistant Candida albicans strains.</title>
        <authorList>
            <person name="Dunkel N."/>
            <person name="Blass J."/>
            <person name="Rogers P.D."/>
            <person name="Morschhauser J."/>
        </authorList>
    </citation>
    <scope>FUNCTION</scope>
</reference>
<reference key="7">
    <citation type="journal article" date="2009" name="Fungal Genet. Biol.">
        <title>Rep1p negatively regulating MDR1 efflux pump involved in drug resistance in Candida albicans.</title>
        <authorList>
            <person name="Chen C.G."/>
            <person name="Yang Y.L."/>
            <person name="Tseng K.Y."/>
            <person name="Shih H.I."/>
            <person name="Liou C.H."/>
            <person name="Lin C.C."/>
            <person name="Lo H.J."/>
        </authorList>
    </citation>
    <scope>FUNCTION</scope>
    <scope>DISRUPTION PHENOTYPE</scope>
</reference>
<reference key="8">
    <citation type="journal article" date="2009" name="Mol. Biol. Cell">
        <title>Genome-wide mapping of the coactivator Ada2p yields insight into the functional roles of SAGA/ADA complex in Candida albicans.</title>
        <authorList>
            <person name="Sellam A."/>
            <person name="Askew C."/>
            <person name="Epp E."/>
            <person name="Lavoie H."/>
            <person name="Whiteway M."/>
            <person name="Nantel A."/>
        </authorList>
    </citation>
    <scope>FUNCTION</scope>
    <scope>PROMOTER-BINDING</scope>
</reference>
<reference key="9">
    <citation type="journal article" date="2009" name="Proteomics Clin. Appl.">
        <title>Proteomic analysis of Mrr1p- and Tac1p-associated differential protein expression in azole-resistant clinical isolates of Candida albicans.</title>
        <authorList>
            <person name="Hoehamer C.F."/>
            <person name="Cummings E.D."/>
            <person name="Hilliard G.M."/>
            <person name="Morschhaeuser J."/>
            <person name="Rogers P.D."/>
        </authorList>
    </citation>
    <scope>FUNCTION</scope>
</reference>
<reference key="10">
    <citation type="journal article" date="2011" name="Antimicrob. Agents Chemother.">
        <title>Differential requirement of the transcription factor Mcm1 for activation of the Candida albicans multidrug efflux pump MDR1 by its regulators Mrr1 and Cap1.</title>
        <authorList>
            <person name="Mogavero S."/>
            <person name="Tavanti A."/>
            <person name="Senesi S."/>
            <person name="Rogers P.D."/>
            <person name="Morschhaeuser J."/>
        </authorList>
    </citation>
    <scope>FUNCTION</scope>
    <scope>MUTAGENESIS OF PRO-683</scope>
</reference>
<reference key="11">
    <citation type="journal article" date="2011" name="Antimicrob. Agents Chemother.">
        <title>Regulation of efflux pump expression and drug resistance by the transcription factors Mrr1, Upc2, and Cap1 in Candida albicans.</title>
        <authorList>
            <person name="Schubert S."/>
            <person name="Barker K.S."/>
            <person name="Znaidi S."/>
            <person name="Schneider S."/>
            <person name="Dierolf F."/>
            <person name="Dunkel N."/>
            <person name="Aid M."/>
            <person name="Boucher G."/>
            <person name="Rogers P.D."/>
            <person name="Raymond M."/>
            <person name="Morschhaeuser J."/>
        </authorList>
    </citation>
    <scope>FUNCTION</scope>
    <scope>MUTAGENESIS OF PRO-683</scope>
</reference>
<reference key="12">
    <citation type="journal article" date="2011" name="J. Biol. Chem.">
        <title>Cap2-HAP complex is a critical transcriptional regulator that has dual but contrasting roles in regulation of iron homeostasis in Candida albicans.</title>
        <authorList>
            <person name="Singh R.P."/>
            <person name="Prasad H.K."/>
            <person name="Sinha I."/>
            <person name="Agarwal N."/>
            <person name="Natarajan K."/>
        </authorList>
    </citation>
    <scope>INDUCTION</scope>
</reference>
<reference key="13">
    <citation type="journal article" date="2012" name="Mol. Microbiol.">
        <title>The stepwise acquisition of fluconazole resistance mutations causes a gradual loss of fitness in Candida albicans.</title>
        <authorList>
            <person name="Sasse C."/>
            <person name="Dunkel N."/>
            <person name="Schaefer T."/>
            <person name="Schneider S."/>
            <person name="Dierolf F."/>
            <person name="Ohlsen K."/>
            <person name="Morschhaeuser J."/>
        </authorList>
    </citation>
    <scope>FUNCTION</scope>
    <scope>MUTAGENESIS OF PRO-683</scope>
</reference>
<reference key="14">
    <citation type="journal article" date="2013" name="Antimicrob. Agents Chemother.">
        <title>Multidrug-resistant transporter mdr1p-mediated uptake of a novel antifungal compound.</title>
        <authorList>
            <person name="Sun N."/>
            <person name="Li D."/>
            <person name="Fonzi W."/>
            <person name="Li X."/>
            <person name="Zhang L."/>
            <person name="Calderone R."/>
        </authorList>
    </citation>
    <scope>FUNCTION</scope>
    <scope>DISRUPTION PHENOTYPE</scope>
</reference>
<reference key="15">
    <citation type="journal article" date="2013" name="Mol. Microbiol.">
        <title>Analysis of a fungus-specific transcription factor family, the Candida albicans zinc cluster proteins, by artificial activation.</title>
        <authorList>
            <person name="Schillig R."/>
            <person name="Morschhauser J."/>
        </authorList>
    </citation>
    <scope>FUNCTION</scope>
    <scope>MUTAGENESIS OF PRO-683</scope>
</reference>
<reference key="16">
    <citation type="journal article" date="2014" name="Eukaryot. Cell">
        <title>Distinct roles of Candida albicans drug resistance transcription factors TAC1, MRR1, and UPC2 in virulence.</title>
        <authorList>
            <person name="Lohberger A."/>
            <person name="Coste A.T."/>
            <person name="Sanglard D."/>
        </authorList>
    </citation>
    <scope>FUNCTION</scope>
</reference>
<comment type="function">
    <text evidence="4 5 6 7 8 9 10 12 13 14 15">Transcription factor that acts as the central regulator of the MDR1 efflux pump. Other target genes include those encoding oxidoreductases, whose up-regulation in fluconazole-resistant isolates may help to prevent cell damage resulting from the generation of toxic molecules in the presence of fluconazole and thereby contribute to drug resistance.</text>
</comment>
<comment type="subcellular location">
    <subcellularLocation>
        <location evidence="17">Nucleus</location>
    </subcellularLocation>
</comment>
<comment type="induction">
    <text evidence="4 11">Expression is coordinately up-regulated with MDR1 in drug-resistant, clinical isolates. Expression is induced by HAP43.</text>
</comment>
<comment type="disruption phenotype">
    <text evidence="4 7 14">Decreases MDR1 expression and leads to greater fluconazole and cerulenin susceptibility.</text>
</comment>